<organism>
    <name type="scientific">Gloeobacter violaceus (strain ATCC 29082 / PCC 7421)</name>
    <dbReference type="NCBI Taxonomy" id="251221"/>
    <lineage>
        <taxon>Bacteria</taxon>
        <taxon>Bacillati</taxon>
        <taxon>Cyanobacteriota</taxon>
        <taxon>Cyanophyceae</taxon>
        <taxon>Gloeobacterales</taxon>
        <taxon>Gloeobacteraceae</taxon>
        <taxon>Gloeobacter</taxon>
    </lineage>
</organism>
<keyword id="KW-0997">Cell inner membrane</keyword>
<keyword id="KW-1003">Cell membrane</keyword>
<keyword id="KW-0472">Membrane</keyword>
<keyword id="KW-0602">Photosynthesis</keyword>
<keyword id="KW-0604">Photosystem II</keyword>
<keyword id="KW-0674">Reaction center</keyword>
<keyword id="KW-1185">Reference proteome</keyword>
<keyword id="KW-0812">Transmembrane</keyword>
<keyword id="KW-1133">Transmembrane helix</keyword>
<proteinExistence type="inferred from homology"/>
<dbReference type="EMBL" id="BA000045">
    <property type="protein sequence ID" value="BAC91575.1"/>
    <property type="molecule type" value="Genomic_DNA"/>
</dbReference>
<dbReference type="RefSeq" id="NP_926580.1">
    <property type="nucleotide sequence ID" value="NC_005125.1"/>
</dbReference>
<dbReference type="RefSeq" id="WP_011143623.1">
    <property type="nucleotide sequence ID" value="NC_005125.1"/>
</dbReference>
<dbReference type="SMR" id="Q7NF92"/>
<dbReference type="STRING" id="251221.gene:10761149"/>
<dbReference type="EnsemblBacteria" id="BAC91575">
    <property type="protein sequence ID" value="BAC91575"/>
    <property type="gene ID" value="BAC91575"/>
</dbReference>
<dbReference type="KEGG" id="gvi:gsl3634"/>
<dbReference type="PATRIC" id="fig|251221.4.peg.3669"/>
<dbReference type="HOGENOM" id="CLU_212150_0_0_3"/>
<dbReference type="InParanoid" id="Q7NF92"/>
<dbReference type="OrthoDB" id="467250at2"/>
<dbReference type="PhylomeDB" id="Q7NF92"/>
<dbReference type="Proteomes" id="UP000000557">
    <property type="component" value="Chromosome"/>
</dbReference>
<dbReference type="GO" id="GO:0009539">
    <property type="term" value="C:photosystem II reaction center"/>
    <property type="evidence" value="ECO:0007669"/>
    <property type="project" value="InterPro"/>
</dbReference>
<dbReference type="GO" id="GO:0005886">
    <property type="term" value="C:plasma membrane"/>
    <property type="evidence" value="ECO:0007669"/>
    <property type="project" value="UniProtKB-SubCell"/>
</dbReference>
<dbReference type="GO" id="GO:0015979">
    <property type="term" value="P:photosynthesis"/>
    <property type="evidence" value="ECO:0007669"/>
    <property type="project" value="UniProtKB-UniRule"/>
</dbReference>
<dbReference type="HAMAP" id="MF_01316">
    <property type="entry name" value="PSII_PsbI"/>
    <property type="match status" value="1"/>
</dbReference>
<dbReference type="InterPro" id="IPR003686">
    <property type="entry name" value="PSII_PsbI"/>
</dbReference>
<dbReference type="InterPro" id="IPR037271">
    <property type="entry name" value="PSII_PsbI_sf"/>
</dbReference>
<dbReference type="Pfam" id="PF02532">
    <property type="entry name" value="PsbI"/>
    <property type="match status" value="1"/>
</dbReference>
<dbReference type="SUPFAM" id="SSF161041">
    <property type="entry name" value="Photosystem II reaction center protein I, PsbI"/>
    <property type="match status" value="1"/>
</dbReference>
<gene>
    <name evidence="1" type="primary">psbI</name>
    <name type="ordered locus">gsl3634</name>
</gene>
<sequence>MEVLKWVVTIVVLLFVAIFAFGFLSGDPSRNPGRGSGQ</sequence>
<accession>Q7NF92</accession>
<feature type="chain" id="PRO_0000298292" description="Photosystem II reaction center protein I">
    <location>
        <begin position="1"/>
        <end position="38"/>
    </location>
</feature>
<feature type="transmembrane region" description="Helical" evidence="1">
    <location>
        <begin position="6"/>
        <end position="26"/>
    </location>
</feature>
<protein>
    <recommendedName>
        <fullName evidence="1">Photosystem II reaction center protein I</fullName>
        <shortName evidence="1">PSII-I</shortName>
    </recommendedName>
    <alternativeName>
        <fullName evidence="1">PSII 4.4 kDa protein</fullName>
    </alternativeName>
</protein>
<evidence type="ECO:0000255" key="1">
    <source>
        <dbReference type="HAMAP-Rule" id="MF_01316"/>
    </source>
</evidence>
<evidence type="ECO:0000305" key="2">
    <source>
    </source>
</evidence>
<comment type="function">
    <text evidence="1">One of the components of the core complex of photosystem II (PSII), required for its stability and/or assembly. PSII is a light-driven water:plastoquinone oxidoreductase that uses light energy to abstract electrons from H(2)O, generating O(2) and a proton gradient subsequently used for ATP formation. It consists of a core antenna complex that captures photons, and an electron transfer chain that converts photonic excitation into a charge separation.</text>
</comment>
<comment type="subunit">
    <text evidence="2">PSII is composed of 1 copy each of membrane proteins PsbA, PsbB, PsbC, PsbD, PsbE, PsbF, PsbH, PsbI, PsbJ, PsbK, PsbL, PsbM, PsbT, PsbX, Psb30/Ycf12, peripheral proteins PsbO, CyanoQ (PsbQ), PsbU, PsbV and a large number of cofactors. It forms dimeric complexes.</text>
</comment>
<comment type="subcellular location">
    <subcellularLocation>
        <location evidence="1">Cell inner membrane</location>
        <topology evidence="1">Single-pass membrane protein</topology>
    </subcellularLocation>
</comment>
<comment type="similarity">
    <text evidence="1">Belongs to the PsbI family.</text>
</comment>
<name>PSBI_GLOVI</name>
<reference key="1">
    <citation type="journal article" date="2003" name="DNA Res.">
        <title>Complete genome structure of Gloeobacter violaceus PCC 7421, a cyanobacterium that lacks thylakoids.</title>
        <authorList>
            <person name="Nakamura Y."/>
            <person name="Kaneko T."/>
            <person name="Sato S."/>
            <person name="Mimuro M."/>
            <person name="Miyashita H."/>
            <person name="Tsuchiya T."/>
            <person name="Sasamoto S."/>
            <person name="Watanabe A."/>
            <person name="Kawashima K."/>
            <person name="Kishida Y."/>
            <person name="Kiyokawa C."/>
            <person name="Kohara M."/>
            <person name="Matsumoto M."/>
            <person name="Matsuno A."/>
            <person name="Nakazaki N."/>
            <person name="Shimpo S."/>
            <person name="Takeuchi C."/>
            <person name="Yamada M."/>
            <person name="Tabata S."/>
        </authorList>
    </citation>
    <scope>NUCLEOTIDE SEQUENCE [LARGE SCALE GENOMIC DNA]</scope>
    <source>
        <strain>ATCC 29082 / PCC 7421</strain>
    </source>
</reference>